<dbReference type="EMBL" id="CP000050">
    <property type="protein sequence ID" value="AAY49295.1"/>
    <property type="molecule type" value="Genomic_DNA"/>
</dbReference>
<dbReference type="RefSeq" id="WP_011037111.1">
    <property type="nucleotide sequence ID" value="NZ_CP155948.1"/>
</dbReference>
<dbReference type="SMR" id="Q4UUH8"/>
<dbReference type="GeneID" id="58013498"/>
<dbReference type="KEGG" id="xcb:XC_2240"/>
<dbReference type="HOGENOM" id="CLU_069313_0_1_6"/>
<dbReference type="Proteomes" id="UP000000420">
    <property type="component" value="Chromosome"/>
</dbReference>
<dbReference type="GO" id="GO:0009427">
    <property type="term" value="C:bacterial-type flagellum basal body, distal rod, L ring"/>
    <property type="evidence" value="ECO:0007669"/>
    <property type="project" value="InterPro"/>
</dbReference>
<dbReference type="GO" id="GO:0009279">
    <property type="term" value="C:cell outer membrane"/>
    <property type="evidence" value="ECO:0007669"/>
    <property type="project" value="UniProtKB-SubCell"/>
</dbReference>
<dbReference type="GO" id="GO:0003774">
    <property type="term" value="F:cytoskeletal motor activity"/>
    <property type="evidence" value="ECO:0007669"/>
    <property type="project" value="InterPro"/>
</dbReference>
<dbReference type="GO" id="GO:0071973">
    <property type="term" value="P:bacterial-type flagellum-dependent cell motility"/>
    <property type="evidence" value="ECO:0007669"/>
    <property type="project" value="InterPro"/>
</dbReference>
<dbReference type="HAMAP" id="MF_00415">
    <property type="entry name" value="FlgH"/>
    <property type="match status" value="1"/>
</dbReference>
<dbReference type="InterPro" id="IPR000527">
    <property type="entry name" value="Flag_Lring"/>
</dbReference>
<dbReference type="NCBIfam" id="NF001304">
    <property type="entry name" value="PRK00249.1-4"/>
    <property type="match status" value="1"/>
</dbReference>
<dbReference type="PANTHER" id="PTHR34933">
    <property type="entry name" value="FLAGELLAR L-RING PROTEIN"/>
    <property type="match status" value="1"/>
</dbReference>
<dbReference type="PANTHER" id="PTHR34933:SF1">
    <property type="entry name" value="FLAGELLAR L-RING PROTEIN"/>
    <property type="match status" value="1"/>
</dbReference>
<dbReference type="Pfam" id="PF02107">
    <property type="entry name" value="FlgH"/>
    <property type="match status" value="1"/>
</dbReference>
<dbReference type="PRINTS" id="PR01008">
    <property type="entry name" value="FLGLRINGFLGH"/>
</dbReference>
<dbReference type="PROSITE" id="PS51257">
    <property type="entry name" value="PROKAR_LIPOPROTEIN"/>
    <property type="match status" value="1"/>
</dbReference>
<accession>Q4UUH8</accession>
<keyword id="KW-0975">Bacterial flagellum</keyword>
<keyword id="KW-0998">Cell outer membrane</keyword>
<keyword id="KW-0449">Lipoprotein</keyword>
<keyword id="KW-0472">Membrane</keyword>
<keyword id="KW-0564">Palmitate</keyword>
<keyword id="KW-0677">Repeat</keyword>
<keyword id="KW-0732">Signal</keyword>
<sequence>MSRLPSLSSLCLAIACSALLGGCVAAGDVRPFAELAPIVPVVAPVAQPTAGAIYAAGPSLNLYGDRRARDVGDLLTVNLVENTTASSTANTSISKADTVDMSTPTLLGVPLTVNGIDVLRNSTSGDRSFDGKGNTAQSNRMQGSVTVTVMQRLPNGNLVIQGQKNLRLTQGDELVQVQGIVRAADIAPDNSVPSSKVADARIAYGGRGAIAQSNAMGWLSRFFNSRLSPY</sequence>
<gene>
    <name evidence="1" type="primary">flgH</name>
    <name type="ordered locus">XC_2240</name>
</gene>
<protein>
    <recommendedName>
        <fullName evidence="1">Flagellar L-ring protein</fullName>
    </recommendedName>
    <alternativeName>
        <fullName evidence="1">Basal body L-ring protein</fullName>
    </alternativeName>
</protein>
<comment type="function">
    <text evidence="1">Assembles around the rod to form the L-ring and probably protects the motor/basal body from shearing forces during rotation.</text>
</comment>
<comment type="subunit">
    <text evidence="1">The basal body constitutes a major portion of the flagellar organelle and consists of four rings (L,P,S, and M) mounted on a central rod.</text>
</comment>
<comment type="subcellular location">
    <subcellularLocation>
        <location evidence="1">Cell outer membrane</location>
        <topology evidence="1">Lipid-anchor</topology>
    </subcellularLocation>
    <subcellularLocation>
        <location evidence="1">Bacterial flagellum basal body</location>
    </subcellularLocation>
</comment>
<comment type="similarity">
    <text evidence="1">Belongs to the FlgH family.</text>
</comment>
<reference key="1">
    <citation type="journal article" date="2005" name="Genome Res.">
        <title>Comparative and functional genomic analyses of the pathogenicity of phytopathogen Xanthomonas campestris pv. campestris.</title>
        <authorList>
            <person name="Qian W."/>
            <person name="Jia Y."/>
            <person name="Ren S.-X."/>
            <person name="He Y.-Q."/>
            <person name="Feng J.-X."/>
            <person name="Lu L.-F."/>
            <person name="Sun Q."/>
            <person name="Ying G."/>
            <person name="Tang D.-J."/>
            <person name="Tang H."/>
            <person name="Wu W."/>
            <person name="Hao P."/>
            <person name="Wang L."/>
            <person name="Jiang B.-L."/>
            <person name="Zeng S."/>
            <person name="Gu W.-Y."/>
            <person name="Lu G."/>
            <person name="Rong L."/>
            <person name="Tian Y."/>
            <person name="Yao Z."/>
            <person name="Fu G."/>
            <person name="Chen B."/>
            <person name="Fang R."/>
            <person name="Qiang B."/>
            <person name="Chen Z."/>
            <person name="Zhao G.-P."/>
            <person name="Tang J.-L."/>
            <person name="He C."/>
        </authorList>
    </citation>
    <scope>NUCLEOTIDE SEQUENCE [LARGE SCALE GENOMIC DNA]</scope>
    <source>
        <strain>8004</strain>
    </source>
</reference>
<proteinExistence type="inferred from homology"/>
<name>FLGH_XANC8</name>
<feature type="signal peptide" evidence="1">
    <location>
        <begin position="1"/>
        <end position="15"/>
    </location>
</feature>
<feature type="chain" id="PRO_0000236841" description="Flagellar L-ring protein">
    <location>
        <begin position="16"/>
        <end position="230"/>
    </location>
</feature>
<feature type="lipid moiety-binding region" description="N-palmitoyl cysteine" evidence="1">
    <location>
        <position position="16"/>
    </location>
</feature>
<feature type="lipid moiety-binding region" description="S-diacylglycerol cysteine" evidence="1">
    <location>
        <position position="16"/>
    </location>
</feature>
<evidence type="ECO:0000255" key="1">
    <source>
        <dbReference type="HAMAP-Rule" id="MF_00415"/>
    </source>
</evidence>
<organism>
    <name type="scientific">Xanthomonas campestris pv. campestris (strain 8004)</name>
    <dbReference type="NCBI Taxonomy" id="314565"/>
    <lineage>
        <taxon>Bacteria</taxon>
        <taxon>Pseudomonadati</taxon>
        <taxon>Pseudomonadota</taxon>
        <taxon>Gammaproteobacteria</taxon>
        <taxon>Lysobacterales</taxon>
        <taxon>Lysobacteraceae</taxon>
        <taxon>Xanthomonas</taxon>
    </lineage>
</organism>